<reference key="1">
    <citation type="journal article" date="2008" name="J. Bacteriol.">
        <title>The complete genome sequence of Thermococcus onnurineus NA1 reveals a mixed heterotrophic and carboxydotrophic metabolism.</title>
        <authorList>
            <person name="Lee H.S."/>
            <person name="Kang S.G."/>
            <person name="Bae S.S."/>
            <person name="Lim J.K."/>
            <person name="Cho Y."/>
            <person name="Kim Y.J."/>
            <person name="Jeon J.H."/>
            <person name="Cha S.-S."/>
            <person name="Kwon K.K."/>
            <person name="Kim H.-T."/>
            <person name="Park C.-J."/>
            <person name="Lee H.-W."/>
            <person name="Kim S.I."/>
            <person name="Chun J."/>
            <person name="Colwell R.R."/>
            <person name="Kim S.-J."/>
            <person name="Lee J.-H."/>
        </authorList>
    </citation>
    <scope>NUCLEOTIDE SEQUENCE [LARGE SCALE GENOMIC DNA]</scope>
    <source>
        <strain>NA1</strain>
    </source>
</reference>
<evidence type="ECO:0000255" key="1">
    <source>
        <dbReference type="HAMAP-Rule" id="MF_00055"/>
    </source>
</evidence>
<organism>
    <name type="scientific">Thermococcus onnurineus (strain NA1)</name>
    <dbReference type="NCBI Taxonomy" id="523850"/>
    <lineage>
        <taxon>Archaea</taxon>
        <taxon>Methanobacteriati</taxon>
        <taxon>Methanobacteriota</taxon>
        <taxon>Thermococci</taxon>
        <taxon>Thermococcales</taxon>
        <taxon>Thermococcaceae</taxon>
        <taxon>Thermococcus</taxon>
    </lineage>
</organism>
<feature type="chain" id="PRO_1000091789" description="MEMO1 family protein TON_0132">
    <location>
        <begin position="1"/>
        <end position="291"/>
    </location>
</feature>
<comment type="similarity">
    <text evidence="1">Belongs to the MEMO1 family.</text>
</comment>
<gene>
    <name type="ordered locus">TON_0132</name>
</gene>
<dbReference type="EMBL" id="CP000855">
    <property type="protein sequence ID" value="ACJ15617.1"/>
    <property type="molecule type" value="Genomic_DNA"/>
</dbReference>
<dbReference type="RefSeq" id="WP_012571090.1">
    <property type="nucleotide sequence ID" value="NC_011529.1"/>
</dbReference>
<dbReference type="SMR" id="B6YST0"/>
<dbReference type="STRING" id="523850.TON_0132"/>
<dbReference type="GeneID" id="7017786"/>
<dbReference type="KEGG" id="ton:TON_0132"/>
<dbReference type="PATRIC" id="fig|523850.10.peg.132"/>
<dbReference type="eggNOG" id="arCOG01728">
    <property type="taxonomic scope" value="Archaea"/>
</dbReference>
<dbReference type="HOGENOM" id="CLU_038085_2_0_2"/>
<dbReference type="OrthoDB" id="372162at2157"/>
<dbReference type="Proteomes" id="UP000002727">
    <property type="component" value="Chromosome"/>
</dbReference>
<dbReference type="CDD" id="cd07361">
    <property type="entry name" value="MEMO_like"/>
    <property type="match status" value="1"/>
</dbReference>
<dbReference type="Gene3D" id="3.40.830.10">
    <property type="entry name" value="LigB-like"/>
    <property type="match status" value="1"/>
</dbReference>
<dbReference type="HAMAP" id="MF_00055">
    <property type="entry name" value="MEMO1"/>
    <property type="match status" value="1"/>
</dbReference>
<dbReference type="InterPro" id="IPR002737">
    <property type="entry name" value="MEMO1_fam"/>
</dbReference>
<dbReference type="NCBIfam" id="TIGR04336">
    <property type="entry name" value="AmmeMemoSam_B"/>
    <property type="match status" value="1"/>
</dbReference>
<dbReference type="NCBIfam" id="NF001987">
    <property type="entry name" value="PRK00782.1"/>
    <property type="match status" value="1"/>
</dbReference>
<dbReference type="PANTHER" id="PTHR11060">
    <property type="entry name" value="PROTEIN MEMO1"/>
    <property type="match status" value="1"/>
</dbReference>
<dbReference type="PANTHER" id="PTHR11060:SF0">
    <property type="entry name" value="PROTEIN MEMO1"/>
    <property type="match status" value="1"/>
</dbReference>
<dbReference type="Pfam" id="PF01875">
    <property type="entry name" value="Memo"/>
    <property type="match status" value="1"/>
</dbReference>
<dbReference type="SUPFAM" id="SSF53213">
    <property type="entry name" value="LigB-like"/>
    <property type="match status" value="1"/>
</dbReference>
<proteinExistence type="inferred from homology"/>
<sequence>MVRYPAVAGSFYPGDETLIEMLEKFFRDLGEHGSERKITAGVVPHAGYVFSGYTASRTFKAIYEDGLPETFVILGPNHTGIGSPIAVYPSGSWLTPLGEIEVDSEMAKTIAKLSGIADLDELAHKYEHSIEVQLPFIQYLAEKARTDVRIVPITLGIQDEEVVEDLGKAIYEAANELDRDVVIIASTDFMHYGPAYGYVPFRARADELPHRVKEWDFRVIQKILDFDVKGMFGELRKMDHTMCGPGGVGTAIVYSRLAGALEAELLHYTTSFEVSRSTDAIVGYASIVFRK</sequence>
<accession>B6YST0</accession>
<name>Y132_THEON</name>
<protein>
    <recommendedName>
        <fullName evidence="1">MEMO1 family protein TON_0132</fullName>
    </recommendedName>
</protein>